<dbReference type="EMBL" id="CP000786">
    <property type="protein sequence ID" value="ABZ99347.1"/>
    <property type="molecule type" value="Genomic_DNA"/>
</dbReference>
<dbReference type="RefSeq" id="WP_012390203.1">
    <property type="nucleotide sequence ID" value="NC_010602.1"/>
</dbReference>
<dbReference type="SMR" id="B0SQV0"/>
<dbReference type="STRING" id="456481.LEPBI_I3282"/>
<dbReference type="KEGG" id="lbi:LEPBI_I3282"/>
<dbReference type="HOGENOM" id="CLU_036856_0_1_12"/>
<dbReference type="OrthoDB" id="9806673at2"/>
<dbReference type="BioCyc" id="LBIF456481:LEPBI_RS16075-MONOMER"/>
<dbReference type="Proteomes" id="UP000001847">
    <property type="component" value="Chromosome I"/>
</dbReference>
<dbReference type="GO" id="GO:0005737">
    <property type="term" value="C:cytoplasm"/>
    <property type="evidence" value="ECO:0007669"/>
    <property type="project" value="UniProtKB-SubCell"/>
</dbReference>
<dbReference type="GO" id="GO:0016149">
    <property type="term" value="F:translation release factor activity, codon specific"/>
    <property type="evidence" value="ECO:0007669"/>
    <property type="project" value="UniProtKB-UniRule"/>
</dbReference>
<dbReference type="FunFam" id="3.30.160.20:FF:000004">
    <property type="entry name" value="Peptide chain release factor 1"/>
    <property type="match status" value="1"/>
</dbReference>
<dbReference type="FunFam" id="3.30.70.1660:FF:000002">
    <property type="entry name" value="Peptide chain release factor 1"/>
    <property type="match status" value="1"/>
</dbReference>
<dbReference type="FunFam" id="3.30.70.1660:FF:000004">
    <property type="entry name" value="Peptide chain release factor 1"/>
    <property type="match status" value="1"/>
</dbReference>
<dbReference type="Gene3D" id="3.30.160.20">
    <property type="match status" value="1"/>
</dbReference>
<dbReference type="Gene3D" id="3.30.70.1660">
    <property type="match status" value="1"/>
</dbReference>
<dbReference type="Gene3D" id="6.10.140.1950">
    <property type="match status" value="1"/>
</dbReference>
<dbReference type="HAMAP" id="MF_00093">
    <property type="entry name" value="Rel_fac_1"/>
    <property type="match status" value="1"/>
</dbReference>
<dbReference type="InterPro" id="IPR005139">
    <property type="entry name" value="PCRF"/>
</dbReference>
<dbReference type="InterPro" id="IPR000352">
    <property type="entry name" value="Pep_chain_release_fac_I"/>
</dbReference>
<dbReference type="InterPro" id="IPR045853">
    <property type="entry name" value="Pep_chain_release_fac_I_sf"/>
</dbReference>
<dbReference type="InterPro" id="IPR050057">
    <property type="entry name" value="Prokaryotic/Mito_RF"/>
</dbReference>
<dbReference type="InterPro" id="IPR004373">
    <property type="entry name" value="RF-1"/>
</dbReference>
<dbReference type="NCBIfam" id="TIGR00019">
    <property type="entry name" value="prfA"/>
    <property type="match status" value="1"/>
</dbReference>
<dbReference type="NCBIfam" id="NF001859">
    <property type="entry name" value="PRK00591.1"/>
    <property type="match status" value="1"/>
</dbReference>
<dbReference type="PANTHER" id="PTHR43804">
    <property type="entry name" value="LD18447P"/>
    <property type="match status" value="1"/>
</dbReference>
<dbReference type="PANTHER" id="PTHR43804:SF7">
    <property type="entry name" value="LD18447P"/>
    <property type="match status" value="1"/>
</dbReference>
<dbReference type="Pfam" id="PF03462">
    <property type="entry name" value="PCRF"/>
    <property type="match status" value="1"/>
</dbReference>
<dbReference type="Pfam" id="PF00472">
    <property type="entry name" value="RF-1"/>
    <property type="match status" value="1"/>
</dbReference>
<dbReference type="SMART" id="SM00937">
    <property type="entry name" value="PCRF"/>
    <property type="match status" value="1"/>
</dbReference>
<dbReference type="SUPFAM" id="SSF75620">
    <property type="entry name" value="Release factor"/>
    <property type="match status" value="1"/>
</dbReference>
<dbReference type="PROSITE" id="PS00745">
    <property type="entry name" value="RF_PROK_I"/>
    <property type="match status" value="1"/>
</dbReference>
<gene>
    <name evidence="1" type="primary">prfA</name>
    <name type="ordered locus">LEPBI_I3282</name>
</gene>
<organism>
    <name type="scientific">Leptospira biflexa serovar Patoc (strain Patoc 1 / ATCC 23582 / Paris)</name>
    <dbReference type="NCBI Taxonomy" id="456481"/>
    <lineage>
        <taxon>Bacteria</taxon>
        <taxon>Pseudomonadati</taxon>
        <taxon>Spirochaetota</taxon>
        <taxon>Spirochaetia</taxon>
        <taxon>Leptospirales</taxon>
        <taxon>Leptospiraceae</taxon>
        <taxon>Leptospira</taxon>
    </lineage>
</organism>
<accession>B0SQV0</accession>
<evidence type="ECO:0000255" key="1">
    <source>
        <dbReference type="HAMAP-Rule" id="MF_00093"/>
    </source>
</evidence>
<name>RF1_LEPBP</name>
<feature type="chain" id="PRO_1000093471" description="Peptide chain release factor 1">
    <location>
        <begin position="1"/>
        <end position="353"/>
    </location>
</feature>
<feature type="modified residue" description="N5-methylglutamine" evidence="1">
    <location>
        <position position="230"/>
    </location>
</feature>
<protein>
    <recommendedName>
        <fullName evidence="1">Peptide chain release factor 1</fullName>
        <shortName evidence="1">RF-1</shortName>
    </recommendedName>
</protein>
<sequence>MIDRLKKIQEKYLRIEDELAKATASDTLKNLSKERSRLTPVYTKADEYLKITKDCQDAKSLLESENDPDMHSMLKSEIEEGEKKLEELAKELEIMLLPPDPNSGKSILVEIRAGTGGEESGLFCADLFRMYNKYADKKGLRVEIIDMSQTGIGGYKEIVFSLDDDKAYDLFKFESGTHRVQRIPETESGGRIHTSAVTVAILPEAEEKEVEIKESDLRIDVYRSSGAGGQHVNTTDSAVRITHIPTGIVVASQEERSQIKNRDKAMRVLRARIADQAAETAKLSADALKKAQVGSGDRSERIRTYNFPQGRCTDHRIGFTSHNLPAIMEGDLDELIDALIQEDRSKRLAEAKA</sequence>
<reference key="1">
    <citation type="journal article" date="2008" name="PLoS ONE">
        <title>Genome sequence of the saprophyte Leptospira biflexa provides insights into the evolution of Leptospira and the pathogenesis of leptospirosis.</title>
        <authorList>
            <person name="Picardeau M."/>
            <person name="Bulach D.M."/>
            <person name="Bouchier C."/>
            <person name="Zuerner R.L."/>
            <person name="Zidane N."/>
            <person name="Wilson P.J."/>
            <person name="Creno S."/>
            <person name="Kuczek E.S."/>
            <person name="Bommezzadri S."/>
            <person name="Davis J.C."/>
            <person name="McGrath A."/>
            <person name="Johnson M.J."/>
            <person name="Boursaux-Eude C."/>
            <person name="Seemann T."/>
            <person name="Rouy Z."/>
            <person name="Coppel R.L."/>
            <person name="Rood J.I."/>
            <person name="Lajus A."/>
            <person name="Davies J.K."/>
            <person name="Medigue C."/>
            <person name="Adler B."/>
        </authorList>
    </citation>
    <scope>NUCLEOTIDE SEQUENCE [LARGE SCALE GENOMIC DNA]</scope>
    <source>
        <strain>Patoc 1 / ATCC 23582 / Paris</strain>
    </source>
</reference>
<proteinExistence type="inferred from homology"/>
<keyword id="KW-0963">Cytoplasm</keyword>
<keyword id="KW-0488">Methylation</keyword>
<keyword id="KW-0648">Protein biosynthesis</keyword>
<keyword id="KW-1185">Reference proteome</keyword>
<comment type="function">
    <text evidence="1">Peptide chain release factor 1 directs the termination of translation in response to the peptide chain termination codons UAG and UAA.</text>
</comment>
<comment type="subcellular location">
    <subcellularLocation>
        <location evidence="1">Cytoplasm</location>
    </subcellularLocation>
</comment>
<comment type="PTM">
    <text evidence="1">Methylated by PrmC. Methylation increases the termination efficiency of RF1.</text>
</comment>
<comment type="similarity">
    <text evidence="1">Belongs to the prokaryotic/mitochondrial release factor family.</text>
</comment>